<reference key="1">
    <citation type="journal article" date="2005" name="Science">
        <title>The genome of the basidiomycetous yeast and human pathogen Cryptococcus neoformans.</title>
        <authorList>
            <person name="Loftus B.J."/>
            <person name="Fung E."/>
            <person name="Roncaglia P."/>
            <person name="Rowley D."/>
            <person name="Amedeo P."/>
            <person name="Bruno D."/>
            <person name="Vamathevan J."/>
            <person name="Miranda M."/>
            <person name="Anderson I.J."/>
            <person name="Fraser J.A."/>
            <person name="Allen J.E."/>
            <person name="Bosdet I.E."/>
            <person name="Brent M.R."/>
            <person name="Chiu R."/>
            <person name="Doering T.L."/>
            <person name="Donlin M.J."/>
            <person name="D'Souza C.A."/>
            <person name="Fox D.S."/>
            <person name="Grinberg V."/>
            <person name="Fu J."/>
            <person name="Fukushima M."/>
            <person name="Haas B.J."/>
            <person name="Huang J.C."/>
            <person name="Janbon G."/>
            <person name="Jones S.J.M."/>
            <person name="Koo H.L."/>
            <person name="Krzywinski M.I."/>
            <person name="Kwon-Chung K.J."/>
            <person name="Lengeler K.B."/>
            <person name="Maiti R."/>
            <person name="Marra M.A."/>
            <person name="Marra R.E."/>
            <person name="Mathewson C.A."/>
            <person name="Mitchell T.G."/>
            <person name="Pertea M."/>
            <person name="Riggs F.R."/>
            <person name="Salzberg S.L."/>
            <person name="Schein J.E."/>
            <person name="Shvartsbeyn A."/>
            <person name="Shin H."/>
            <person name="Shumway M."/>
            <person name="Specht C.A."/>
            <person name="Suh B.B."/>
            <person name="Tenney A."/>
            <person name="Utterback T.R."/>
            <person name="Wickes B.L."/>
            <person name="Wortman J.R."/>
            <person name="Wye N.H."/>
            <person name="Kronstad J.W."/>
            <person name="Lodge J.K."/>
            <person name="Heitman J."/>
            <person name="Davis R.W."/>
            <person name="Fraser C.M."/>
            <person name="Hyman R.W."/>
        </authorList>
    </citation>
    <scope>NUCLEOTIDE SEQUENCE [LARGE SCALE GENOMIC DNA]</scope>
    <source>
        <strain>B-3501A</strain>
    </source>
</reference>
<sequence length="617" mass="70183">MIPMILYASETGNAQDTAERVARAFRANGRAVTCLPMDQFPISALPHTYLLILLTSTHGRGDPPPAMLPLWTALLRSSLPEDILEDVHFALFGLGDSSYERFCYAGKMLLRRMEQLGATKMGEPAWGDERSPNGIEDAFLPWLQQTLDLYLPYLPLISPTPKIIESTVLPPPIYKISPASTSKSVEHDLSLERLSISFPIPNGKPAPVRVEDQARDKASTSRTKPDDWVWATLKKNIRLTSKDWWQDVREIELEFDDPDTKPYTAGSICSLQPQSREDDVNMFLEMMELTSQADEVVTIESLLDEQPLPSHLPPAGTPTTLRSLLTNHLDIRYSPRKSFFEWLRRLSTNEMERERLDEFISDPDEIHTYATRPSRTIVETLADFRFTRIPMSHILEILPPLRRRQFSIASSWEDHPGKVQLLVALIEYKTNLKIPRKGLCSSWLNGLPVGTRIPIHIASPTLFLPQDPEVPIILVGPGTGVAPMRAFVEIRVRQGAAKNTSLYFGCRSSTTDYFFESEWDVHREKGVKIQVAASRDQEERIYVQHLIKRDKEYVKEWIVDKKGWLFISGSSNAMPREVREAVAWCISKEGAGDMTEEESKAYVEQMFEDKRGGEESW</sequence>
<organism>
    <name type="scientific">Cryptococcus neoformans var. neoformans serotype D (strain B-3501A)</name>
    <name type="common">Filobasidiella neoformans</name>
    <dbReference type="NCBI Taxonomy" id="283643"/>
    <lineage>
        <taxon>Eukaryota</taxon>
        <taxon>Fungi</taxon>
        <taxon>Dikarya</taxon>
        <taxon>Basidiomycota</taxon>
        <taxon>Agaricomycotina</taxon>
        <taxon>Tremellomycetes</taxon>
        <taxon>Tremellales</taxon>
        <taxon>Cryptococcaceae</taxon>
        <taxon>Cryptococcus</taxon>
        <taxon>Cryptococcus neoformans species complex</taxon>
    </lineage>
</organism>
<protein>
    <recommendedName>
        <fullName evidence="1">NADPH-dependent diflavin oxidoreductase 1</fullName>
        <ecNumber evidence="1">1.18.1.-</ecNumber>
    </recommendedName>
    <alternativeName>
        <fullName evidence="1">NADPH-dependent FMN and FAD-containing oxidoreductase</fullName>
    </alternativeName>
</protein>
<gene>
    <name evidence="1" type="primary">TAH18</name>
    <name type="ordered locus">CNBF0310</name>
</gene>
<keyword id="KW-0963">Cytoplasm</keyword>
<keyword id="KW-0274">FAD</keyword>
<keyword id="KW-0285">Flavoprotein</keyword>
<keyword id="KW-0288">FMN</keyword>
<keyword id="KW-0496">Mitochondrion</keyword>
<keyword id="KW-0521">NADP</keyword>
<keyword id="KW-0560">Oxidoreductase</keyword>
<dbReference type="EC" id="1.18.1.-" evidence="1"/>
<dbReference type="EMBL" id="AAEY01000030">
    <property type="protein sequence ID" value="EAL20219.1"/>
    <property type="molecule type" value="Genomic_DNA"/>
</dbReference>
<dbReference type="RefSeq" id="XP_774866.1">
    <property type="nucleotide sequence ID" value="XM_769773.1"/>
</dbReference>
<dbReference type="SMR" id="P0CP13"/>
<dbReference type="EnsemblFungi" id="AAW44330">
    <property type="protein sequence ID" value="AAW44330"/>
    <property type="gene ID" value="CNF04590"/>
</dbReference>
<dbReference type="GeneID" id="4936583"/>
<dbReference type="KEGG" id="cnb:CNBF0310"/>
<dbReference type="VEuPathDB" id="FungiDB:CNBF0310"/>
<dbReference type="HOGENOM" id="CLU_001570_17_6_1"/>
<dbReference type="OrthoDB" id="2936at5206"/>
<dbReference type="GO" id="GO:0005829">
    <property type="term" value="C:cytosol"/>
    <property type="evidence" value="ECO:0007669"/>
    <property type="project" value="TreeGrafter"/>
</dbReference>
<dbReference type="GO" id="GO:0005739">
    <property type="term" value="C:mitochondrion"/>
    <property type="evidence" value="ECO:0007669"/>
    <property type="project" value="UniProtKB-SubCell"/>
</dbReference>
<dbReference type="GO" id="GO:0050660">
    <property type="term" value="F:flavin adenine dinucleotide binding"/>
    <property type="evidence" value="ECO:0007669"/>
    <property type="project" value="UniProtKB-UniRule"/>
</dbReference>
<dbReference type="GO" id="GO:0010181">
    <property type="term" value="F:FMN binding"/>
    <property type="evidence" value="ECO:0007669"/>
    <property type="project" value="UniProtKB-UniRule"/>
</dbReference>
<dbReference type="GO" id="GO:0050661">
    <property type="term" value="F:NADP binding"/>
    <property type="evidence" value="ECO:0007669"/>
    <property type="project" value="UniProtKB-UniRule"/>
</dbReference>
<dbReference type="GO" id="GO:0003958">
    <property type="term" value="F:NADPH-hemoprotein reductase activity"/>
    <property type="evidence" value="ECO:0007669"/>
    <property type="project" value="InterPro"/>
</dbReference>
<dbReference type="GO" id="GO:0016226">
    <property type="term" value="P:iron-sulfur cluster assembly"/>
    <property type="evidence" value="ECO:0007669"/>
    <property type="project" value="UniProtKB-UniRule"/>
</dbReference>
<dbReference type="FunFam" id="3.40.50.360:FF:000045">
    <property type="entry name" value="NADPH-dependent diflavin oxidoreductase 1"/>
    <property type="match status" value="1"/>
</dbReference>
<dbReference type="FunFam" id="3.40.50.80:FF:000062">
    <property type="entry name" value="NADPH-dependent diflavin oxidoreductase 1"/>
    <property type="match status" value="1"/>
</dbReference>
<dbReference type="Gene3D" id="3.40.50.360">
    <property type="match status" value="1"/>
</dbReference>
<dbReference type="Gene3D" id="1.20.990.10">
    <property type="entry name" value="NADPH-cytochrome p450 Reductase, Chain A, domain 3"/>
    <property type="match status" value="1"/>
</dbReference>
<dbReference type="Gene3D" id="3.40.50.80">
    <property type="entry name" value="Nucleotide-binding domain of ferredoxin-NADP reductase (FNR) module"/>
    <property type="match status" value="1"/>
</dbReference>
<dbReference type="Gene3D" id="2.40.30.10">
    <property type="entry name" value="Translation factors"/>
    <property type="match status" value="1"/>
</dbReference>
<dbReference type="HAMAP" id="MF_03178">
    <property type="entry name" value="NDOR1"/>
    <property type="match status" value="1"/>
</dbReference>
<dbReference type="InterPro" id="IPR003097">
    <property type="entry name" value="CysJ-like_FAD-binding"/>
</dbReference>
<dbReference type="InterPro" id="IPR017927">
    <property type="entry name" value="FAD-bd_FR_type"/>
</dbReference>
<dbReference type="InterPro" id="IPR001094">
    <property type="entry name" value="Flavdoxin-like"/>
</dbReference>
<dbReference type="InterPro" id="IPR008254">
    <property type="entry name" value="Flavodoxin/NO_synth"/>
</dbReference>
<dbReference type="InterPro" id="IPR001709">
    <property type="entry name" value="Flavoprot_Pyr_Nucl_cyt_Rdtase"/>
</dbReference>
<dbReference type="InterPro" id="IPR029039">
    <property type="entry name" value="Flavoprotein-like_sf"/>
</dbReference>
<dbReference type="InterPro" id="IPR039261">
    <property type="entry name" value="FNR_nucleotide-bd"/>
</dbReference>
<dbReference type="InterPro" id="IPR023173">
    <property type="entry name" value="NADPH_Cyt_P450_Rdtase_alpha"/>
</dbReference>
<dbReference type="InterPro" id="IPR028879">
    <property type="entry name" value="NDOR1"/>
</dbReference>
<dbReference type="InterPro" id="IPR001433">
    <property type="entry name" value="OxRdtase_FAD/NAD-bd"/>
</dbReference>
<dbReference type="InterPro" id="IPR017938">
    <property type="entry name" value="Riboflavin_synthase-like_b-brl"/>
</dbReference>
<dbReference type="PANTHER" id="PTHR19384:SF10">
    <property type="entry name" value="NADPH-DEPENDENT DIFLAVIN OXIDOREDUCTASE 1"/>
    <property type="match status" value="1"/>
</dbReference>
<dbReference type="PANTHER" id="PTHR19384">
    <property type="entry name" value="NITRIC OXIDE SYNTHASE-RELATED"/>
    <property type="match status" value="1"/>
</dbReference>
<dbReference type="Pfam" id="PF00667">
    <property type="entry name" value="FAD_binding_1"/>
    <property type="match status" value="1"/>
</dbReference>
<dbReference type="Pfam" id="PF00258">
    <property type="entry name" value="Flavodoxin_1"/>
    <property type="match status" value="1"/>
</dbReference>
<dbReference type="Pfam" id="PF00175">
    <property type="entry name" value="NAD_binding_1"/>
    <property type="match status" value="1"/>
</dbReference>
<dbReference type="PRINTS" id="PR00369">
    <property type="entry name" value="FLAVODOXIN"/>
</dbReference>
<dbReference type="PRINTS" id="PR00371">
    <property type="entry name" value="FPNCR"/>
</dbReference>
<dbReference type="SUPFAM" id="SSF52343">
    <property type="entry name" value="Ferredoxin reductase-like, C-terminal NADP-linked domain"/>
    <property type="match status" value="1"/>
</dbReference>
<dbReference type="SUPFAM" id="SSF52218">
    <property type="entry name" value="Flavoproteins"/>
    <property type="match status" value="1"/>
</dbReference>
<dbReference type="SUPFAM" id="SSF63380">
    <property type="entry name" value="Riboflavin synthase domain-like"/>
    <property type="match status" value="1"/>
</dbReference>
<dbReference type="PROSITE" id="PS51384">
    <property type="entry name" value="FAD_FR"/>
    <property type="match status" value="1"/>
</dbReference>
<dbReference type="PROSITE" id="PS50902">
    <property type="entry name" value="FLAVODOXIN_LIKE"/>
    <property type="match status" value="1"/>
</dbReference>
<comment type="function">
    <text evidence="1">NADPH-dependent reductase which is a central component of the cytosolic iron-sulfur (Fe-S) protein assembly (CIA) machinery. Transfers electrons from NADPH via its FAD and FMN prosthetic groups to the [2Fe-2S] cluster of DRE2, another key component of the CIA machinery. In turn, this reduced cluster provides electrons for assembly of cytosolic iron-sulfur cluster proteins. Positively controls H(2)O(2)-induced cell death.</text>
</comment>
<comment type="catalytic activity">
    <reaction evidence="1">
        <text>2 oxidized [2Fe-2S]-[protein] + NADPH = 2 reduced [2Fe-2S]-[protein] + NADP(+) + H(+)</text>
        <dbReference type="Rhea" id="RHEA:67716"/>
        <dbReference type="Rhea" id="RHEA-COMP:17327"/>
        <dbReference type="Rhea" id="RHEA-COMP:17328"/>
        <dbReference type="ChEBI" id="CHEBI:15378"/>
        <dbReference type="ChEBI" id="CHEBI:33737"/>
        <dbReference type="ChEBI" id="CHEBI:33738"/>
        <dbReference type="ChEBI" id="CHEBI:57783"/>
        <dbReference type="ChEBI" id="CHEBI:58349"/>
    </reaction>
    <physiologicalReaction direction="left-to-right" evidence="1">
        <dbReference type="Rhea" id="RHEA:67717"/>
    </physiologicalReaction>
</comment>
<comment type="cofactor">
    <cofactor evidence="1">
        <name>FAD</name>
        <dbReference type="ChEBI" id="CHEBI:57692"/>
    </cofactor>
</comment>
<comment type="cofactor">
    <cofactor evidence="1">
        <name>FMN</name>
        <dbReference type="ChEBI" id="CHEBI:58210"/>
    </cofactor>
</comment>
<comment type="subunit">
    <text evidence="1">Interacts with DRE2; as part of the cytosolic iron-sulfur (Fe-S) protein assembly (CIA) machinery.</text>
</comment>
<comment type="subcellular location">
    <subcellularLocation>
        <location evidence="1">Cytoplasm</location>
    </subcellularLocation>
    <subcellularLocation>
        <location evidence="1">Mitochondrion</location>
    </subcellularLocation>
    <text evidence="1">Relocalizes to mitochondria after H(2)O(2) exposure.</text>
</comment>
<comment type="similarity">
    <text evidence="1">Belongs to the NADPH-dependent diflavin oxidoreductase NDOR1 family.</text>
</comment>
<comment type="similarity">
    <text evidence="1">In the N-terminal section; belongs to the flavodoxin family.</text>
</comment>
<comment type="similarity">
    <text evidence="1">In the C-terminal section; belongs to the flavoprotein pyridine nucleotide cytochrome reductase family.</text>
</comment>
<feature type="chain" id="PRO_0000410163" description="NADPH-dependent diflavin oxidoreductase 1">
    <location>
        <begin position="1"/>
        <end position="617"/>
    </location>
</feature>
<feature type="domain" description="Flavodoxin-like" evidence="1">
    <location>
        <begin position="3"/>
        <end position="147"/>
    </location>
</feature>
<feature type="domain" description="FAD-binding FR-type" evidence="1">
    <location>
        <begin position="226"/>
        <end position="465"/>
    </location>
</feature>
<feature type="binding site" evidence="1">
    <location>
        <begin position="9"/>
        <end position="14"/>
    </location>
    <ligand>
        <name>FMN</name>
        <dbReference type="ChEBI" id="CHEBI:58210"/>
    </ligand>
</feature>
<feature type="binding site" evidence="1">
    <location>
        <begin position="56"/>
        <end position="59"/>
    </location>
    <ligand>
        <name>FMN</name>
        <dbReference type="ChEBI" id="CHEBI:58210"/>
    </ligand>
</feature>
<feature type="binding site" evidence="1">
    <location>
        <begin position="94"/>
        <end position="103"/>
    </location>
    <ligand>
        <name>FMN</name>
        <dbReference type="ChEBI" id="CHEBI:58210"/>
    </ligand>
</feature>
<feature type="binding site" evidence="1">
    <location>
        <position position="129"/>
    </location>
    <ligand>
        <name>FMN</name>
        <dbReference type="ChEBI" id="CHEBI:58210"/>
    </ligand>
</feature>
<feature type="binding site" evidence="1">
    <location>
        <begin position="404"/>
        <end position="407"/>
    </location>
    <ligand>
        <name>FAD</name>
        <dbReference type="ChEBI" id="CHEBI:57692"/>
    </ligand>
</feature>
<feature type="binding site" evidence="1">
    <location>
        <begin position="438"/>
        <end position="441"/>
    </location>
    <ligand>
        <name>FAD</name>
        <dbReference type="ChEBI" id="CHEBI:57692"/>
    </ligand>
</feature>
<feature type="binding site" evidence="1">
    <location>
        <position position="479"/>
    </location>
    <ligand>
        <name>NADP(+)</name>
        <dbReference type="ChEBI" id="CHEBI:58349"/>
    </ligand>
</feature>
<feature type="binding site" evidence="1">
    <location>
        <begin position="534"/>
        <end position="535"/>
    </location>
    <ligand>
        <name>NADP(+)</name>
        <dbReference type="ChEBI" id="CHEBI:58349"/>
    </ligand>
</feature>
<feature type="binding site" evidence="1">
    <location>
        <begin position="540"/>
        <end position="544"/>
    </location>
    <ligand>
        <name>NADP(+)</name>
        <dbReference type="ChEBI" id="CHEBI:58349"/>
    </ligand>
</feature>
<feature type="binding site" evidence="1">
    <location>
        <position position="617"/>
    </location>
    <ligand>
        <name>FAD</name>
        <dbReference type="ChEBI" id="CHEBI:57692"/>
    </ligand>
</feature>
<evidence type="ECO:0000255" key="1">
    <source>
        <dbReference type="HAMAP-Rule" id="MF_03178"/>
    </source>
</evidence>
<proteinExistence type="inferred from homology"/>
<accession>P0CP13</accession>
<accession>Q55RG0</accession>
<accession>Q5KER0</accession>
<name>NDOR1_CRYNB</name>